<sequence>MNLFDFFRANKKPSTASVAKERLQIIVAHERGQRSTPDYLPSLQKELVEVIRKYVNIGNDDVHVALESQGSCSILELNITLPDR</sequence>
<feature type="chain" id="PRO_0000298162" description="Cell division topological specificity factor">
    <location>
        <begin position="1"/>
        <end position="84"/>
    </location>
</feature>
<proteinExistence type="inferred from homology"/>
<evidence type="ECO:0000255" key="1">
    <source>
        <dbReference type="HAMAP-Rule" id="MF_00262"/>
    </source>
</evidence>
<protein>
    <recommendedName>
        <fullName evidence="1">Cell division topological specificity factor</fullName>
    </recommendedName>
</protein>
<organism>
    <name type="scientific">Pseudomonas fluorescens (strain Pf0-1)</name>
    <dbReference type="NCBI Taxonomy" id="205922"/>
    <lineage>
        <taxon>Bacteria</taxon>
        <taxon>Pseudomonadati</taxon>
        <taxon>Pseudomonadota</taxon>
        <taxon>Gammaproteobacteria</taxon>
        <taxon>Pseudomonadales</taxon>
        <taxon>Pseudomonadaceae</taxon>
        <taxon>Pseudomonas</taxon>
    </lineage>
</organism>
<name>MINE_PSEPF</name>
<dbReference type="EMBL" id="CP000094">
    <property type="protein sequence ID" value="ABA73436.1"/>
    <property type="molecule type" value="Genomic_DNA"/>
</dbReference>
<dbReference type="RefSeq" id="WP_007960071.1">
    <property type="nucleotide sequence ID" value="NC_007492.2"/>
</dbReference>
<dbReference type="SMR" id="Q3KFM0"/>
<dbReference type="GeneID" id="76212346"/>
<dbReference type="KEGG" id="pfo:Pfl01_1693"/>
<dbReference type="eggNOG" id="COG0851">
    <property type="taxonomic scope" value="Bacteria"/>
</dbReference>
<dbReference type="HOGENOM" id="CLU_137929_2_1_6"/>
<dbReference type="Proteomes" id="UP000002704">
    <property type="component" value="Chromosome"/>
</dbReference>
<dbReference type="GO" id="GO:0051301">
    <property type="term" value="P:cell division"/>
    <property type="evidence" value="ECO:0007669"/>
    <property type="project" value="UniProtKB-KW"/>
</dbReference>
<dbReference type="GO" id="GO:0032955">
    <property type="term" value="P:regulation of division septum assembly"/>
    <property type="evidence" value="ECO:0007669"/>
    <property type="project" value="InterPro"/>
</dbReference>
<dbReference type="FunFam" id="3.30.1070.10:FF:000001">
    <property type="entry name" value="Cell division topological specificity factor"/>
    <property type="match status" value="1"/>
</dbReference>
<dbReference type="Gene3D" id="3.30.1070.10">
    <property type="entry name" value="Cell division topological specificity factor MinE"/>
    <property type="match status" value="1"/>
</dbReference>
<dbReference type="HAMAP" id="MF_00262">
    <property type="entry name" value="MinE"/>
    <property type="match status" value="1"/>
</dbReference>
<dbReference type="InterPro" id="IPR005527">
    <property type="entry name" value="MinE"/>
</dbReference>
<dbReference type="InterPro" id="IPR036707">
    <property type="entry name" value="MinE_sf"/>
</dbReference>
<dbReference type="NCBIfam" id="TIGR01215">
    <property type="entry name" value="minE"/>
    <property type="match status" value="1"/>
</dbReference>
<dbReference type="NCBIfam" id="NF001422">
    <property type="entry name" value="PRK00296.1"/>
    <property type="match status" value="1"/>
</dbReference>
<dbReference type="NCBIfam" id="NF010595">
    <property type="entry name" value="PRK13989.1"/>
    <property type="match status" value="1"/>
</dbReference>
<dbReference type="Pfam" id="PF03776">
    <property type="entry name" value="MinE"/>
    <property type="match status" value="1"/>
</dbReference>
<dbReference type="SUPFAM" id="SSF55229">
    <property type="entry name" value="Cell division protein MinE topological specificity domain"/>
    <property type="match status" value="1"/>
</dbReference>
<reference key="1">
    <citation type="journal article" date="2009" name="Genome Biol.">
        <title>Genomic and genetic analyses of diversity and plant interactions of Pseudomonas fluorescens.</title>
        <authorList>
            <person name="Silby M.W."/>
            <person name="Cerdeno-Tarraga A.M."/>
            <person name="Vernikos G.S."/>
            <person name="Giddens S.R."/>
            <person name="Jackson R.W."/>
            <person name="Preston G.M."/>
            <person name="Zhang X.-X."/>
            <person name="Moon C.D."/>
            <person name="Gehrig S.M."/>
            <person name="Godfrey S.A.C."/>
            <person name="Knight C.G."/>
            <person name="Malone J.G."/>
            <person name="Robinson Z."/>
            <person name="Spiers A.J."/>
            <person name="Harris S."/>
            <person name="Challis G.L."/>
            <person name="Yaxley A.M."/>
            <person name="Harris D."/>
            <person name="Seeger K."/>
            <person name="Murphy L."/>
            <person name="Rutter S."/>
            <person name="Squares R."/>
            <person name="Quail M.A."/>
            <person name="Saunders E."/>
            <person name="Mavromatis K."/>
            <person name="Brettin T.S."/>
            <person name="Bentley S.D."/>
            <person name="Hothersall J."/>
            <person name="Stephens E."/>
            <person name="Thomas C.M."/>
            <person name="Parkhill J."/>
            <person name="Levy S.B."/>
            <person name="Rainey P.B."/>
            <person name="Thomson N.R."/>
        </authorList>
    </citation>
    <scope>NUCLEOTIDE SEQUENCE [LARGE SCALE GENOMIC DNA]</scope>
    <source>
        <strain>Pf0-1</strain>
    </source>
</reference>
<comment type="function">
    <text evidence="1">Prevents the cell division inhibition by proteins MinC and MinD at internal division sites while permitting inhibition at polar sites. This ensures cell division at the proper site by restricting the formation of a division septum at the midpoint of the long axis of the cell.</text>
</comment>
<comment type="similarity">
    <text evidence="1">Belongs to the MinE family.</text>
</comment>
<gene>
    <name evidence="1" type="primary">minE</name>
    <name type="ordered locus">Pfl01_1693</name>
</gene>
<accession>Q3KFM0</accession>
<keyword id="KW-0131">Cell cycle</keyword>
<keyword id="KW-0132">Cell division</keyword>